<accession>P30553</accession>
<evidence type="ECO:0000250" key="1">
    <source>
        <dbReference type="UniProtKB" id="P17124"/>
    </source>
</evidence>
<evidence type="ECO:0000255" key="2"/>
<evidence type="ECO:0000255" key="3">
    <source>
        <dbReference type="PROSITE-ProRule" id="PRU00521"/>
    </source>
</evidence>
<evidence type="ECO:0000256" key="4">
    <source>
        <dbReference type="SAM" id="MobiDB-lite"/>
    </source>
</evidence>
<comment type="function">
    <text>Receptor for gastrin and cholecystokinin. The CCK-B receptors occur throughout the central nervous system where they modulate anxiety, analgesia, arousal, and neuroleptic activity. This receptor mediates its action by association with G proteins that activate a phosphatidylinositol-calcium second messenger system.</text>
</comment>
<comment type="subcellular location">
    <subcellularLocation>
        <location>Cell membrane</location>
        <topology>Multi-pass membrane protein</topology>
    </subcellularLocation>
</comment>
<comment type="tissue specificity">
    <text>Parietal cells, pancreas, brain and various neoplastic tissues.</text>
</comment>
<comment type="similarity">
    <text evidence="3">Belongs to the G-protein coupled receptor 1 family.</text>
</comment>
<feature type="chain" id="PRO_0000069478" description="Gastrin/cholecystokinin type B receptor">
    <location>
        <begin position="1"/>
        <end position="452"/>
    </location>
</feature>
<feature type="topological domain" description="Extracellular" evidence="2">
    <location>
        <begin position="1"/>
        <end position="57"/>
    </location>
</feature>
<feature type="transmembrane region" description="Helical; Name=1" evidence="2">
    <location>
        <begin position="58"/>
        <end position="79"/>
    </location>
</feature>
<feature type="topological domain" description="Cytoplasmic" evidence="2">
    <location>
        <begin position="80"/>
        <end position="87"/>
    </location>
</feature>
<feature type="transmembrane region" description="Helical; Name=2" evidence="2">
    <location>
        <begin position="88"/>
        <end position="109"/>
    </location>
</feature>
<feature type="topological domain" description="Extracellular" evidence="2">
    <location>
        <begin position="110"/>
        <end position="131"/>
    </location>
</feature>
<feature type="transmembrane region" description="Helical; Name=3" evidence="2">
    <location>
        <begin position="132"/>
        <end position="150"/>
    </location>
</feature>
<feature type="topological domain" description="Cytoplasmic" evidence="2">
    <location>
        <begin position="151"/>
        <end position="170"/>
    </location>
</feature>
<feature type="transmembrane region" description="Helical; Name=4" evidence="2">
    <location>
        <begin position="171"/>
        <end position="189"/>
    </location>
</feature>
<feature type="topological domain" description="Extracellular" evidence="2">
    <location>
        <begin position="190"/>
        <end position="219"/>
    </location>
</feature>
<feature type="transmembrane region" description="Helical; Name=5" evidence="2">
    <location>
        <begin position="220"/>
        <end position="242"/>
    </location>
</feature>
<feature type="topological domain" description="Cytoplasmic" evidence="2">
    <location>
        <begin position="243"/>
        <end position="338"/>
    </location>
</feature>
<feature type="transmembrane region" description="Helical; Name=6" evidence="2">
    <location>
        <begin position="339"/>
        <end position="360"/>
    </location>
</feature>
<feature type="topological domain" description="Extracellular" evidence="2">
    <location>
        <begin position="361"/>
        <end position="378"/>
    </location>
</feature>
<feature type="transmembrane region" description="Helical; Name=7" evidence="2">
    <location>
        <begin position="379"/>
        <end position="399"/>
    </location>
</feature>
<feature type="topological domain" description="Cytoplasmic" evidence="2">
    <location>
        <begin position="400"/>
        <end position="452"/>
    </location>
</feature>
<feature type="region of interest" description="Disordered" evidence="4">
    <location>
        <begin position="1"/>
        <end position="21"/>
    </location>
</feature>
<feature type="region of interest" description="Disordered" evidence="4">
    <location>
        <begin position="257"/>
        <end position="286"/>
    </location>
</feature>
<feature type="region of interest" description="Disordered" evidence="4">
    <location>
        <begin position="421"/>
        <end position="452"/>
    </location>
</feature>
<feature type="compositionally biased region" description="Polar residues" evidence="4">
    <location>
        <begin position="434"/>
        <end position="452"/>
    </location>
</feature>
<feature type="lipid moiety-binding region" description="S-palmitoyl cysteine" evidence="1">
    <location>
        <position position="413"/>
    </location>
</feature>
<feature type="glycosylation site" description="N-linked (GlcNAc...) asparagine" evidence="2">
    <location>
        <position position="7"/>
    </location>
</feature>
<feature type="glycosylation site" description="N-linked (GlcNAc...) asparagine" evidence="2">
    <location>
        <position position="30"/>
    </location>
</feature>
<feature type="glycosylation site" description="N-linked (GlcNAc...) asparagine" evidence="2">
    <location>
        <position position="36"/>
    </location>
</feature>
<feature type="disulfide bond" evidence="3">
    <location>
        <begin position="127"/>
        <end position="205"/>
    </location>
</feature>
<name>GASR_RAT</name>
<sequence length="452" mass="48957">MELLKLNRSVQGPGPGSGSSLCRPGVSLLNSSSAGNLSCDPPRIRGTGTRELEMAIRITLYAVIFLMSVGGNVLIIVVLGLSRRLRTVTNAFLLSLAVSDLLLAVACMPFTLLPNLMGTFIFGTVICKAISYLMGVSVSVSTLNLVAIALERYSAICRPLQARVWQTRSHAARVILATWLLSGLLMVPYPVYTMVQPVGPRVLQCMHRWPSARVQQTWSVLLLLLLFFIPGVVIAVAYGLISRELYLGLHFDGENDSETQSRARNQGGLPGGAAPGPVHQNGGCRPVTSVAGEDSDGCCVQLPRSRLEMTTLTTPTPGPVPGPRPNQAKLLAKKRVVRMLLVIVLLFFLCWLPVYSVNTWRAFDGPGAQRALSGAPISFIHLLSYVSACVNPLVYCFMHRRFRQACLDTCARCCPRPPRARPQPLPDEDPPTPSIASLSRLSYTTISTLGPG</sequence>
<reference key="1">
    <citation type="journal article" date="1992" name="Proc. Natl. Acad. Sci. U.S.A.">
        <title>Brain and gastrointestinal cholecystokinin receptor family: structure and functional expression.</title>
        <authorList>
            <person name="Wank S.A."/>
            <person name="Pisegna J.R."/>
            <person name="de Weerth A."/>
        </authorList>
    </citation>
    <scope>NUCLEOTIDE SEQUENCE [MRNA]</scope>
    <source>
        <tissue>Brain</tissue>
    </source>
</reference>
<dbReference type="EMBL" id="M99418">
    <property type="protein sequence ID" value="AAA40925.1"/>
    <property type="molecule type" value="mRNA"/>
</dbReference>
<dbReference type="PIR" id="A46195">
    <property type="entry name" value="A46195"/>
</dbReference>
<dbReference type="RefSeq" id="NP_037297.1">
    <property type="nucleotide sequence ID" value="NM_013165.2"/>
</dbReference>
<dbReference type="SMR" id="P30553"/>
<dbReference type="FunCoup" id="P30553">
    <property type="interactions" value="135"/>
</dbReference>
<dbReference type="STRING" id="10116.ENSRNOP00000024077"/>
<dbReference type="BindingDB" id="P30553"/>
<dbReference type="ChEMBL" id="CHEMBL3508"/>
<dbReference type="DrugCentral" id="P30553"/>
<dbReference type="GuidetoPHARMACOLOGY" id="77"/>
<dbReference type="GlyCosmos" id="P30553">
    <property type="glycosylation" value="3 sites, No reported glycans"/>
</dbReference>
<dbReference type="GlyGen" id="P30553">
    <property type="glycosylation" value="5 sites"/>
</dbReference>
<dbReference type="iPTMnet" id="P30553"/>
<dbReference type="PhosphoSitePlus" id="P30553"/>
<dbReference type="PaxDb" id="10116-ENSRNOP00000024077"/>
<dbReference type="GeneID" id="25706"/>
<dbReference type="KEGG" id="rno:25706"/>
<dbReference type="UCSC" id="RGD:2290">
    <property type="organism name" value="rat"/>
</dbReference>
<dbReference type="AGR" id="RGD:2290"/>
<dbReference type="CTD" id="887"/>
<dbReference type="RGD" id="2290">
    <property type="gene designation" value="Cckbr"/>
</dbReference>
<dbReference type="eggNOG" id="KOG3656">
    <property type="taxonomic scope" value="Eukaryota"/>
</dbReference>
<dbReference type="InParanoid" id="P30553"/>
<dbReference type="OrthoDB" id="5987936at2759"/>
<dbReference type="PhylomeDB" id="P30553"/>
<dbReference type="Reactome" id="R-RNO-375276">
    <property type="pathway name" value="Peptide ligand-binding receptors"/>
</dbReference>
<dbReference type="Reactome" id="R-RNO-416476">
    <property type="pathway name" value="G alpha (q) signalling events"/>
</dbReference>
<dbReference type="Reactome" id="R-RNO-881907">
    <property type="pathway name" value="Gastrin-CREB signalling pathway via PKC and MAPK"/>
</dbReference>
<dbReference type="PRO" id="PR:P30553"/>
<dbReference type="Proteomes" id="UP000002494">
    <property type="component" value="Unplaced"/>
</dbReference>
<dbReference type="GO" id="GO:0016020">
    <property type="term" value="C:membrane"/>
    <property type="evidence" value="ECO:0000266"/>
    <property type="project" value="RGD"/>
</dbReference>
<dbReference type="GO" id="GO:0005886">
    <property type="term" value="C:plasma membrane"/>
    <property type="evidence" value="ECO:0000318"/>
    <property type="project" value="GO_Central"/>
</dbReference>
<dbReference type="GO" id="GO:0004951">
    <property type="term" value="F:cholecystokinin receptor activity"/>
    <property type="evidence" value="ECO:0000266"/>
    <property type="project" value="RGD"/>
</dbReference>
<dbReference type="GO" id="GO:0015054">
    <property type="term" value="F:gastrin receptor activity"/>
    <property type="evidence" value="ECO:0000315"/>
    <property type="project" value="RGD"/>
</dbReference>
<dbReference type="GO" id="GO:0008188">
    <property type="term" value="F:neuropeptide receptor activity"/>
    <property type="evidence" value="ECO:0000318"/>
    <property type="project" value="GO_Central"/>
</dbReference>
<dbReference type="GO" id="GO:0017046">
    <property type="term" value="F:peptide hormone binding"/>
    <property type="evidence" value="ECO:0000266"/>
    <property type="project" value="RGD"/>
</dbReference>
<dbReference type="GO" id="GO:0031741">
    <property type="term" value="F:type B gastrin/cholecystokinin receptor binding"/>
    <property type="evidence" value="ECO:0000266"/>
    <property type="project" value="RGD"/>
</dbReference>
<dbReference type="GO" id="GO:0002209">
    <property type="term" value="P:behavioral defense response"/>
    <property type="evidence" value="ECO:0000315"/>
    <property type="project" value="RGD"/>
</dbReference>
<dbReference type="GO" id="GO:0038188">
    <property type="term" value="P:cholecystokinin signaling pathway"/>
    <property type="evidence" value="ECO:0000266"/>
    <property type="project" value="RGD"/>
</dbReference>
<dbReference type="GO" id="GO:0048565">
    <property type="term" value="P:digestive tract development"/>
    <property type="evidence" value="ECO:0000266"/>
    <property type="project" value="RGD"/>
</dbReference>
<dbReference type="GO" id="GO:0070371">
    <property type="term" value="P:ERK1 and ERK2 cascade"/>
    <property type="evidence" value="ECO:0000315"/>
    <property type="project" value="RGD"/>
</dbReference>
<dbReference type="GO" id="GO:0044849">
    <property type="term" value="P:estrous cycle"/>
    <property type="evidence" value="ECO:0000314"/>
    <property type="project" value="RGD"/>
</dbReference>
<dbReference type="GO" id="GO:0001696">
    <property type="term" value="P:gastric acid secretion"/>
    <property type="evidence" value="ECO:0000266"/>
    <property type="project" value="RGD"/>
</dbReference>
<dbReference type="GO" id="GO:0048732">
    <property type="term" value="P:gland development"/>
    <property type="evidence" value="ECO:0000266"/>
    <property type="project" value="RGD"/>
</dbReference>
<dbReference type="GO" id="GO:0001821">
    <property type="term" value="P:histamine secretion"/>
    <property type="evidence" value="ECO:0000315"/>
    <property type="project" value="RGD"/>
</dbReference>
<dbReference type="GO" id="GO:0007218">
    <property type="term" value="P:neuropeptide signaling pathway"/>
    <property type="evidence" value="ECO:0000318"/>
    <property type="project" value="GO_Central"/>
</dbReference>
<dbReference type="GO" id="GO:0045851">
    <property type="term" value="P:pH reduction"/>
    <property type="evidence" value="ECO:0000266"/>
    <property type="project" value="RGD"/>
</dbReference>
<dbReference type="GO" id="GO:0007200">
    <property type="term" value="P:phospholipase C-activating G protein-coupled receptor signaling pathway"/>
    <property type="evidence" value="ECO:0000266"/>
    <property type="project" value="RGD"/>
</dbReference>
<dbReference type="GO" id="GO:2000987">
    <property type="term" value="P:positive regulation of behavioral fear response"/>
    <property type="evidence" value="ECO:0000315"/>
    <property type="project" value="RGD"/>
</dbReference>
<dbReference type="GO" id="GO:0008284">
    <property type="term" value="P:positive regulation of cell population proliferation"/>
    <property type="evidence" value="ECO:0000315"/>
    <property type="project" value="RGD"/>
</dbReference>
<dbReference type="GO" id="GO:0007204">
    <property type="term" value="P:positive regulation of cytosolic calcium ion concentration"/>
    <property type="evidence" value="ECO:0000250"/>
    <property type="project" value="UniProtKB"/>
</dbReference>
<dbReference type="GO" id="GO:0090274">
    <property type="term" value="P:positive regulation of somatostatin secretion"/>
    <property type="evidence" value="ECO:0000315"/>
    <property type="project" value="RGD"/>
</dbReference>
<dbReference type="GO" id="GO:0050806">
    <property type="term" value="P:positive regulation of synaptic transmission"/>
    <property type="evidence" value="ECO:0000315"/>
    <property type="project" value="RGD"/>
</dbReference>
<dbReference type="GO" id="GO:0032230">
    <property type="term" value="P:positive regulation of synaptic transmission, GABAergic"/>
    <property type="evidence" value="ECO:0000315"/>
    <property type="project" value="RGD"/>
</dbReference>
<dbReference type="GO" id="GO:0051968">
    <property type="term" value="P:positive regulation of synaptic transmission, glutamatergic"/>
    <property type="evidence" value="ECO:0000315"/>
    <property type="project" value="RGD"/>
</dbReference>
<dbReference type="GO" id="GO:0032868">
    <property type="term" value="P:response to insulin"/>
    <property type="evidence" value="ECO:0000270"/>
    <property type="project" value="RGD"/>
</dbReference>
<dbReference type="Gene3D" id="1.20.1070.10">
    <property type="entry name" value="Rhodopsin 7-helix transmembrane proteins"/>
    <property type="match status" value="1"/>
</dbReference>
<dbReference type="InterPro" id="IPR009126">
    <property type="entry name" value="Cholcskin_rcpt"/>
</dbReference>
<dbReference type="InterPro" id="IPR000314">
    <property type="entry name" value="Gastrin_rcpt"/>
</dbReference>
<dbReference type="InterPro" id="IPR000276">
    <property type="entry name" value="GPCR_Rhodpsn"/>
</dbReference>
<dbReference type="InterPro" id="IPR017452">
    <property type="entry name" value="GPCR_Rhodpsn_7TM"/>
</dbReference>
<dbReference type="PANTHER" id="PTHR24243">
    <property type="entry name" value="G-PROTEIN COUPLED RECEPTOR"/>
    <property type="match status" value="1"/>
</dbReference>
<dbReference type="PANTHER" id="PTHR24243:SF45">
    <property type="entry name" value="GASTRIN_CHOLECYSTOKININ TYPE B RECEPTOR"/>
    <property type="match status" value="1"/>
</dbReference>
<dbReference type="Pfam" id="PF00001">
    <property type="entry name" value="7tm_1"/>
    <property type="match status" value="1"/>
</dbReference>
<dbReference type="PRINTS" id="PR01822">
    <property type="entry name" value="CCYSTOKININR"/>
</dbReference>
<dbReference type="PRINTS" id="PR00527">
    <property type="entry name" value="GASTRINR"/>
</dbReference>
<dbReference type="PRINTS" id="PR00237">
    <property type="entry name" value="GPCRRHODOPSN"/>
</dbReference>
<dbReference type="SUPFAM" id="SSF81321">
    <property type="entry name" value="Family A G protein-coupled receptor-like"/>
    <property type="match status" value="1"/>
</dbReference>
<dbReference type="PROSITE" id="PS00237">
    <property type="entry name" value="G_PROTEIN_RECEP_F1_1"/>
    <property type="match status" value="1"/>
</dbReference>
<dbReference type="PROSITE" id="PS50262">
    <property type="entry name" value="G_PROTEIN_RECEP_F1_2"/>
    <property type="match status" value="1"/>
</dbReference>
<proteinExistence type="evidence at transcript level"/>
<organism>
    <name type="scientific">Rattus norvegicus</name>
    <name type="common">Rat</name>
    <dbReference type="NCBI Taxonomy" id="10116"/>
    <lineage>
        <taxon>Eukaryota</taxon>
        <taxon>Metazoa</taxon>
        <taxon>Chordata</taxon>
        <taxon>Craniata</taxon>
        <taxon>Vertebrata</taxon>
        <taxon>Euteleostomi</taxon>
        <taxon>Mammalia</taxon>
        <taxon>Eutheria</taxon>
        <taxon>Euarchontoglires</taxon>
        <taxon>Glires</taxon>
        <taxon>Rodentia</taxon>
        <taxon>Myomorpha</taxon>
        <taxon>Muroidea</taxon>
        <taxon>Muridae</taxon>
        <taxon>Murinae</taxon>
        <taxon>Rattus</taxon>
    </lineage>
</organism>
<keyword id="KW-1003">Cell membrane</keyword>
<keyword id="KW-1015">Disulfide bond</keyword>
<keyword id="KW-0297">G-protein coupled receptor</keyword>
<keyword id="KW-0325">Glycoprotein</keyword>
<keyword id="KW-0449">Lipoprotein</keyword>
<keyword id="KW-0472">Membrane</keyword>
<keyword id="KW-0564">Palmitate</keyword>
<keyword id="KW-0675">Receptor</keyword>
<keyword id="KW-1185">Reference proteome</keyword>
<keyword id="KW-0807">Transducer</keyword>
<keyword id="KW-0812">Transmembrane</keyword>
<keyword id="KW-1133">Transmembrane helix</keyword>
<protein>
    <recommendedName>
        <fullName>Gastrin/cholecystokinin type B receptor</fullName>
        <shortName>CCK-B receptor</shortName>
        <shortName>CCK-BR</shortName>
    </recommendedName>
    <alternativeName>
        <fullName>Cholecystokinin-2 receptor</fullName>
        <shortName>CCK2-R</shortName>
    </alternativeName>
</protein>
<gene>
    <name type="primary">Cckbr</name>
</gene>